<comment type="function">
    <text evidence="1">Non-catalytic subunit of the tRNA-splicing endonuclease complex, a complex responsible for identification and cleavage of the splice sites in pre-tRNA. It cleaves pre-tRNA at the 5' and 3' splice sites to release the intron. The products are an intron and two tRNA half-molecules bearing 2',3' cyclic phosphate and 5'-OH termini. There are no conserved sequences at the splice sites, but the intron is invariably located at the same site in the gene, placing the splice sites an invariant distance from the constant structural features of the tRNA body. May be required to embody the molecular ruler of the complex (By similarity).</text>
</comment>
<comment type="subunit">
    <text evidence="1">tRNA splicing endonuclease is a heterotetramer composed of tsp-2/sen2, tsp-1/sen15, tsp-4/sen34 and tsp-5/sen54. Interacts directly with tsp-2/sen2 (By similarity).</text>
</comment>
<comment type="similarity">
    <text evidence="3">Belongs to the SEN54 family.</text>
</comment>
<proteinExistence type="inferred from homology"/>
<feature type="chain" id="PRO_0000194032" description="Probable tRNA-splicing endonuclease subunit tsp-5">
    <location>
        <begin position="1"/>
        <end position="557"/>
    </location>
</feature>
<feature type="region of interest" description="Disordered" evidence="2">
    <location>
        <begin position="1"/>
        <end position="36"/>
    </location>
</feature>
<feature type="region of interest" description="Disordered" evidence="2">
    <location>
        <begin position="131"/>
        <end position="152"/>
    </location>
</feature>
<feature type="region of interest" description="Disordered" evidence="2">
    <location>
        <begin position="225"/>
        <end position="252"/>
    </location>
</feature>
<feature type="region of interest" description="Disordered" evidence="2">
    <location>
        <begin position="370"/>
        <end position="403"/>
    </location>
</feature>
<feature type="region of interest" description="Disordered" evidence="2">
    <location>
        <begin position="514"/>
        <end position="557"/>
    </location>
</feature>
<feature type="compositionally biased region" description="Basic and acidic residues" evidence="2">
    <location>
        <begin position="131"/>
        <end position="140"/>
    </location>
</feature>
<feature type="compositionally biased region" description="Low complexity" evidence="2">
    <location>
        <begin position="370"/>
        <end position="381"/>
    </location>
</feature>
<feature type="compositionally biased region" description="Gly residues" evidence="2">
    <location>
        <begin position="517"/>
        <end position="527"/>
    </location>
</feature>
<feature type="compositionally biased region" description="Gly residues" evidence="2">
    <location>
        <begin position="538"/>
        <end position="549"/>
    </location>
</feature>
<protein>
    <recommendedName>
        <fullName>Probable tRNA-splicing endonuclease subunit tsp-5</fullName>
    </recommendedName>
    <alternativeName>
        <fullName>tRNA-intron endonuclease sen54</fullName>
    </alternativeName>
</protein>
<organism>
    <name type="scientific">Neurospora crassa (strain ATCC 24698 / 74-OR23-1A / CBS 708.71 / DSM 1257 / FGSC 987)</name>
    <dbReference type="NCBI Taxonomy" id="367110"/>
    <lineage>
        <taxon>Eukaryota</taxon>
        <taxon>Fungi</taxon>
        <taxon>Dikarya</taxon>
        <taxon>Ascomycota</taxon>
        <taxon>Pezizomycotina</taxon>
        <taxon>Sordariomycetes</taxon>
        <taxon>Sordariomycetidae</taxon>
        <taxon>Sordariales</taxon>
        <taxon>Sordariaceae</taxon>
        <taxon>Neurospora</taxon>
    </lineage>
</organism>
<name>SEN54_NEUCR</name>
<sequence length="557" mass="60957">MPLDDDLEDNPSLVPPPSTTTTSSNATGDAATMMDEVEEAEDAPTADFRLFASTYSKTKNISAQTIRKGEKDFESHGTRAQASALDASRDAMRDVLSYTRVHNTKSASGWCRGWYFPDWWKDWPEDWEQQKLTKRGKEGAGEDDEEEKDRKLPPLHVRDRVVLLEHTNVASQSLGRAVTGLPKDRPARGREWLLPEEALYLVERGSLDLWWPTKGIEEVFPADGSVPAAAAATTSAKGEGEQRTEEDEEDDDEYKYGLPLSLQAAYALLIGEDGERGKVSLQKFQVFSHLKRAGYNVIRAPTNPLPVQEDTQLTTTTQPASKPISVTEWLISCLPQSKSSPTDPPPYGPLVPPGFYRSYNTIYNYLSLRPSSTSSSASPTADNQPQKPQSPESDESDSGSDSPYKIHYHVYKASTKFTRTRPPPPDFYISVISAKDTSIPTLSEISSLLASAPADLPKAEWLAGGPARLYARLKHGYRNVLLAVNDHGVINYMRFAEGGFAKEELFRNYDMRVSGGPRRGGGGGGKKSGNNNGRGSRGRGGGRGGGRGGRGGRGRGN</sequence>
<dbReference type="EMBL" id="BX842594">
    <property type="protein sequence ID" value="CAE75682.1"/>
    <property type="molecule type" value="Genomic_DNA"/>
</dbReference>
<dbReference type="EMBL" id="CM002237">
    <property type="protein sequence ID" value="EAA34203.2"/>
    <property type="molecule type" value="Genomic_DNA"/>
</dbReference>
<dbReference type="RefSeq" id="XP_963439.2">
    <property type="nucleotide sequence ID" value="XM_958346.2"/>
</dbReference>
<dbReference type="STRING" id="367110.Q7SC91"/>
<dbReference type="PaxDb" id="5141-EFNCRP00000008482"/>
<dbReference type="EnsemblFungi" id="EAA34203">
    <property type="protein sequence ID" value="EAA34203"/>
    <property type="gene ID" value="NCU08510"/>
</dbReference>
<dbReference type="GeneID" id="3879579"/>
<dbReference type="KEGG" id="ncr:NCU08510"/>
<dbReference type="VEuPathDB" id="FungiDB:NCU08510"/>
<dbReference type="HOGENOM" id="CLU_028449_2_0_1"/>
<dbReference type="InParanoid" id="Q7SC91"/>
<dbReference type="OrthoDB" id="408683at2759"/>
<dbReference type="Proteomes" id="UP000001805">
    <property type="component" value="Chromosome 6, Linkage Group II"/>
</dbReference>
<dbReference type="GO" id="GO:0000214">
    <property type="term" value="C:tRNA-intron endonuclease complex"/>
    <property type="evidence" value="ECO:0000318"/>
    <property type="project" value="GO_Central"/>
</dbReference>
<dbReference type="GO" id="GO:0000379">
    <property type="term" value="P:tRNA-type intron splice site recognition and cleavage"/>
    <property type="evidence" value="ECO:0000318"/>
    <property type="project" value="GO_Central"/>
</dbReference>
<dbReference type="InterPro" id="IPR024337">
    <property type="entry name" value="tRNA_splic_suSen54"/>
</dbReference>
<dbReference type="InterPro" id="IPR024336">
    <property type="entry name" value="tRNA_splic_suSen54_N"/>
</dbReference>
<dbReference type="PANTHER" id="PTHR21027">
    <property type="entry name" value="TRNA-SPLICING ENDONUCLEASE SUBUNIT SEN54"/>
    <property type="match status" value="1"/>
</dbReference>
<dbReference type="PANTHER" id="PTHR21027:SF1">
    <property type="entry name" value="TRNA-SPLICING ENDONUCLEASE SUBUNIT SEN54"/>
    <property type="match status" value="1"/>
</dbReference>
<dbReference type="Pfam" id="PF12928">
    <property type="entry name" value="tRNA_int_end_N2"/>
    <property type="match status" value="1"/>
</dbReference>
<accession>Q7SC91</accession>
<evidence type="ECO:0000250" key="1"/>
<evidence type="ECO:0000256" key="2">
    <source>
        <dbReference type="SAM" id="MobiDB-lite"/>
    </source>
</evidence>
<evidence type="ECO:0000305" key="3"/>
<gene>
    <name type="primary">tsp-5</name>
    <name type="synonym">sen54</name>
    <name type="ORF">B18P7.090</name>
    <name type="ORF">NCU08510</name>
</gene>
<reference key="1">
    <citation type="journal article" date="2003" name="Nucleic Acids Res.">
        <title>What's in the genome of a filamentous fungus? Analysis of the Neurospora genome sequence.</title>
        <authorList>
            <person name="Mannhaupt G."/>
            <person name="Montrone C."/>
            <person name="Haase D."/>
            <person name="Mewes H.-W."/>
            <person name="Aign V."/>
            <person name="Hoheisel J.D."/>
            <person name="Fartmann B."/>
            <person name="Nyakatura G."/>
            <person name="Kempken F."/>
            <person name="Maier J."/>
            <person name="Schulte U."/>
        </authorList>
    </citation>
    <scope>NUCLEOTIDE SEQUENCE [LARGE SCALE GENOMIC DNA]</scope>
    <source>
        <strain>ATCC 24698 / 74-OR23-1A / CBS 708.71 / DSM 1257 / FGSC 987</strain>
    </source>
</reference>
<reference key="2">
    <citation type="journal article" date="2003" name="Nature">
        <title>The genome sequence of the filamentous fungus Neurospora crassa.</title>
        <authorList>
            <person name="Galagan J.E."/>
            <person name="Calvo S.E."/>
            <person name="Borkovich K.A."/>
            <person name="Selker E.U."/>
            <person name="Read N.D."/>
            <person name="Jaffe D.B."/>
            <person name="FitzHugh W."/>
            <person name="Ma L.-J."/>
            <person name="Smirnov S."/>
            <person name="Purcell S."/>
            <person name="Rehman B."/>
            <person name="Elkins T."/>
            <person name="Engels R."/>
            <person name="Wang S."/>
            <person name="Nielsen C.B."/>
            <person name="Butler J."/>
            <person name="Endrizzi M."/>
            <person name="Qui D."/>
            <person name="Ianakiev P."/>
            <person name="Bell-Pedersen D."/>
            <person name="Nelson M.A."/>
            <person name="Werner-Washburne M."/>
            <person name="Selitrennikoff C.P."/>
            <person name="Kinsey J.A."/>
            <person name="Braun E.L."/>
            <person name="Zelter A."/>
            <person name="Schulte U."/>
            <person name="Kothe G.O."/>
            <person name="Jedd G."/>
            <person name="Mewes H.-W."/>
            <person name="Staben C."/>
            <person name="Marcotte E."/>
            <person name="Greenberg D."/>
            <person name="Roy A."/>
            <person name="Foley K."/>
            <person name="Naylor J."/>
            <person name="Stange-Thomann N."/>
            <person name="Barrett R."/>
            <person name="Gnerre S."/>
            <person name="Kamal M."/>
            <person name="Kamvysselis M."/>
            <person name="Mauceli E.W."/>
            <person name="Bielke C."/>
            <person name="Rudd S."/>
            <person name="Frishman D."/>
            <person name="Krystofova S."/>
            <person name="Rasmussen C."/>
            <person name="Metzenberg R.L."/>
            <person name="Perkins D.D."/>
            <person name="Kroken S."/>
            <person name="Cogoni C."/>
            <person name="Macino G."/>
            <person name="Catcheside D.E.A."/>
            <person name="Li W."/>
            <person name="Pratt R.J."/>
            <person name="Osmani S.A."/>
            <person name="DeSouza C.P.C."/>
            <person name="Glass N.L."/>
            <person name="Orbach M.J."/>
            <person name="Berglund J.A."/>
            <person name="Voelker R."/>
            <person name="Yarden O."/>
            <person name="Plamann M."/>
            <person name="Seiler S."/>
            <person name="Dunlap J.C."/>
            <person name="Radford A."/>
            <person name="Aramayo R."/>
            <person name="Natvig D.O."/>
            <person name="Alex L.A."/>
            <person name="Mannhaupt G."/>
            <person name="Ebbole D.J."/>
            <person name="Freitag M."/>
            <person name="Paulsen I."/>
            <person name="Sachs M.S."/>
            <person name="Lander E.S."/>
            <person name="Nusbaum C."/>
            <person name="Birren B.W."/>
        </authorList>
    </citation>
    <scope>NUCLEOTIDE SEQUENCE [LARGE SCALE GENOMIC DNA]</scope>
    <source>
        <strain>ATCC 24698 / 74-OR23-1A / CBS 708.71 / DSM 1257 / FGSC 987</strain>
    </source>
</reference>
<keyword id="KW-1185">Reference proteome</keyword>
<keyword id="KW-0819">tRNA processing</keyword>